<proteinExistence type="evidence at protein level"/>
<feature type="chain" id="PRO_0000439686" description="3-oxo-tetronate kinase">
    <location>
        <begin position="1"/>
        <end position="420"/>
    </location>
</feature>
<feature type="binding site" evidence="2">
    <location>
        <position position="258"/>
    </location>
    <ligand>
        <name>ATP</name>
        <dbReference type="ChEBI" id="CHEBI:30616"/>
    </ligand>
</feature>
<feature type="binding site" evidence="2">
    <location>
        <begin position="360"/>
        <end position="363"/>
    </location>
    <ligand>
        <name>ATP</name>
        <dbReference type="ChEBI" id="CHEBI:30616"/>
    </ligand>
</feature>
<feature type="binding site" evidence="2">
    <location>
        <position position="403"/>
    </location>
    <ligand>
        <name>ATP</name>
        <dbReference type="ChEBI" id="CHEBI:30616"/>
    </ligand>
</feature>
<feature type="strand" evidence="8">
    <location>
        <begin position="4"/>
        <end position="10"/>
    </location>
</feature>
<feature type="helix" evidence="8">
    <location>
        <begin position="11"/>
        <end position="23"/>
    </location>
</feature>
<feature type="strand" evidence="8">
    <location>
        <begin position="28"/>
        <end position="34"/>
    </location>
</feature>
<feature type="strand" evidence="8">
    <location>
        <begin position="44"/>
        <end position="49"/>
    </location>
</feature>
<feature type="strand" evidence="8">
    <location>
        <begin position="53"/>
        <end position="55"/>
    </location>
</feature>
<feature type="helix" evidence="8">
    <location>
        <begin position="57"/>
        <end position="73"/>
    </location>
</feature>
<feature type="strand" evidence="8">
    <location>
        <begin position="77"/>
        <end position="82"/>
    </location>
</feature>
<feature type="helix" evidence="8">
    <location>
        <begin position="95"/>
        <end position="105"/>
    </location>
</feature>
<feature type="strand" evidence="8">
    <location>
        <begin position="111"/>
        <end position="114"/>
    </location>
</feature>
<feature type="helix" evidence="8">
    <location>
        <begin position="118"/>
        <end position="120"/>
    </location>
</feature>
<feature type="strand" evidence="8">
    <location>
        <begin position="122"/>
        <end position="125"/>
    </location>
</feature>
<feature type="strand" evidence="8">
    <location>
        <begin position="128"/>
        <end position="131"/>
    </location>
</feature>
<feature type="helix" evidence="8">
    <location>
        <begin position="136"/>
        <end position="138"/>
    </location>
</feature>
<feature type="helix" evidence="8">
    <location>
        <begin position="140"/>
        <end position="143"/>
    </location>
</feature>
<feature type="strand" evidence="8">
    <location>
        <begin position="145"/>
        <end position="147"/>
    </location>
</feature>
<feature type="helix" evidence="8">
    <location>
        <begin position="154"/>
        <end position="159"/>
    </location>
</feature>
<feature type="strand" evidence="8">
    <location>
        <begin position="162"/>
        <end position="164"/>
    </location>
</feature>
<feature type="strand" evidence="8">
    <location>
        <begin position="166"/>
        <end position="169"/>
    </location>
</feature>
<feature type="helix" evidence="8">
    <location>
        <begin position="171"/>
        <end position="176"/>
    </location>
</feature>
<feature type="helix" evidence="8">
    <location>
        <begin position="178"/>
        <end position="190"/>
    </location>
</feature>
<feature type="strand" evidence="8">
    <location>
        <begin position="194"/>
        <end position="198"/>
    </location>
</feature>
<feature type="strand" evidence="8">
    <location>
        <begin position="200"/>
        <end position="202"/>
    </location>
</feature>
<feature type="helix" evidence="8">
    <location>
        <begin position="203"/>
        <end position="213"/>
    </location>
</feature>
<feature type="strand" evidence="8">
    <location>
        <begin position="217"/>
        <end position="222"/>
    </location>
</feature>
<feature type="helix" evidence="8">
    <location>
        <begin position="223"/>
        <end position="234"/>
    </location>
</feature>
<feature type="helix" evidence="8">
    <location>
        <begin position="243"/>
        <end position="245"/>
    </location>
</feature>
<feature type="strand" evidence="8">
    <location>
        <begin position="252"/>
        <end position="256"/>
    </location>
</feature>
<feature type="helix" evidence="8">
    <location>
        <begin position="261"/>
        <end position="270"/>
    </location>
</feature>
<feature type="turn" evidence="8">
    <location>
        <begin position="271"/>
        <end position="273"/>
    </location>
</feature>
<feature type="strand" evidence="8">
    <location>
        <begin position="276"/>
        <end position="278"/>
    </location>
</feature>
<feature type="helix" evidence="8">
    <location>
        <begin position="281"/>
        <end position="283"/>
    </location>
</feature>
<feature type="strand" evidence="8">
    <location>
        <begin position="284"/>
        <end position="286"/>
    </location>
</feature>
<feature type="helix" evidence="8">
    <location>
        <begin position="287"/>
        <end position="303"/>
    </location>
</feature>
<feature type="strand" evidence="8">
    <location>
        <begin position="311"/>
        <end position="313"/>
    </location>
</feature>
<feature type="helix" evidence="8">
    <location>
        <begin position="317"/>
        <end position="319"/>
    </location>
</feature>
<feature type="helix" evidence="8">
    <location>
        <begin position="320"/>
        <end position="324"/>
    </location>
</feature>
<feature type="helix" evidence="8">
    <location>
        <begin position="335"/>
        <end position="350"/>
    </location>
</feature>
<feature type="strand" evidence="8">
    <location>
        <begin position="355"/>
        <end position="360"/>
    </location>
</feature>
<feature type="helix" evidence="8">
    <location>
        <begin position="361"/>
        <end position="370"/>
    </location>
</feature>
<feature type="strand" evidence="8">
    <location>
        <begin position="375"/>
        <end position="383"/>
    </location>
</feature>
<feature type="strand" evidence="8">
    <location>
        <begin position="386"/>
        <end position="395"/>
    </location>
</feature>
<feature type="strand" evidence="8">
    <location>
        <begin position="397"/>
        <end position="401"/>
    </location>
</feature>
<feature type="helix" evidence="8">
    <location>
        <begin position="410"/>
        <end position="416"/>
    </location>
</feature>
<protein>
    <recommendedName>
        <fullName evidence="1">3-oxo-tetronate kinase</fullName>
        <ecNumber evidence="1">2.7.1.217</ecNumber>
    </recommendedName>
    <alternativeName>
        <fullName evidence="5">3-dehydrotetronate 4-kinase</fullName>
    </alternativeName>
</protein>
<gene>
    <name evidence="4" type="primary">otnK</name>
    <name evidence="6" type="synonym">ygbK</name>
    <name evidence="6" type="ordered locus">STM2917</name>
</gene>
<organism>
    <name type="scientific">Salmonella typhimurium (strain LT2 / SGSC1412 / ATCC 700720)</name>
    <dbReference type="NCBI Taxonomy" id="99287"/>
    <lineage>
        <taxon>Bacteria</taxon>
        <taxon>Pseudomonadati</taxon>
        <taxon>Pseudomonadota</taxon>
        <taxon>Gammaproteobacteria</taxon>
        <taxon>Enterobacterales</taxon>
        <taxon>Enterobacteriaceae</taxon>
        <taxon>Salmonella</taxon>
    </lineage>
</organism>
<reference key="1">
    <citation type="journal article" date="2001" name="Nature">
        <title>Complete genome sequence of Salmonella enterica serovar Typhimurium LT2.</title>
        <authorList>
            <person name="McClelland M."/>
            <person name="Sanderson K.E."/>
            <person name="Spieth J."/>
            <person name="Clifton S.W."/>
            <person name="Latreille P."/>
            <person name="Courtney L."/>
            <person name="Porwollik S."/>
            <person name="Ali J."/>
            <person name="Dante M."/>
            <person name="Du F."/>
            <person name="Hou S."/>
            <person name="Layman D."/>
            <person name="Leonard S."/>
            <person name="Nguyen C."/>
            <person name="Scott K."/>
            <person name="Holmes A."/>
            <person name="Grewal N."/>
            <person name="Mulvaney E."/>
            <person name="Ryan E."/>
            <person name="Sun H."/>
            <person name="Florea L."/>
            <person name="Miller W."/>
            <person name="Stoneking T."/>
            <person name="Nhan M."/>
            <person name="Waterston R."/>
            <person name="Wilson R.K."/>
        </authorList>
    </citation>
    <scope>NUCLEOTIDE SEQUENCE [LARGE SCALE GENOMIC DNA]</scope>
    <source>
        <strain>LT2 / SGSC1412 / ATCC 700720</strain>
    </source>
</reference>
<reference key="2">
    <citation type="journal article" date="2016" name="Proc. Natl. Acad. Sci. U.S.A.">
        <title>Assignment of function to a domain of unknown function: DUF1537 is a new kinase family in catabolic pathways for acid sugars.</title>
        <authorList>
            <person name="Zhang X."/>
            <person name="Carter M.S."/>
            <person name="Vetting M.W."/>
            <person name="San Francisco B."/>
            <person name="Zhao S."/>
            <person name="Al-Obaidi N.F."/>
            <person name="Solbiati J.O."/>
            <person name="Thiaville J.J."/>
            <person name="de Crecy-Lagard V."/>
            <person name="Jacobson M.P."/>
            <person name="Almo S.C."/>
            <person name="Gerlt J.A."/>
        </authorList>
    </citation>
    <scope>DISRUPTION PHENOTYPE</scope>
    <source>
        <strain>LT2</strain>
    </source>
</reference>
<reference evidence="7" key="3">
    <citation type="submission" date="2008-07" db="PDB data bank">
        <title>The crystal structure of the putative tRNA synthase from Salmonella typhimurium LT2.</title>
        <authorList>
            <person name="Zhang R."/>
            <person name="Gu M."/>
            <person name="Zhou M."/>
            <person name="Anderson W."/>
            <person name="Joachimiak A."/>
        </authorList>
    </citation>
    <scope>X-RAY CRYSTALLOGRAPHY (2.70 ANGSTROMS)</scope>
    <source>
        <strain>LT2</strain>
    </source>
</reference>
<keyword id="KW-0002">3D-structure</keyword>
<keyword id="KW-0067">ATP-binding</keyword>
<keyword id="KW-0119">Carbohydrate metabolism</keyword>
<keyword id="KW-0418">Kinase</keyword>
<keyword id="KW-0547">Nucleotide-binding</keyword>
<keyword id="KW-1185">Reference proteome</keyword>
<keyword id="KW-0808">Transferase</keyword>
<evidence type="ECO:0000250" key="1">
    <source>
        <dbReference type="UniProtKB" id="P44093"/>
    </source>
</evidence>
<evidence type="ECO:0000250" key="2">
    <source>
        <dbReference type="UniProtKB" id="Q0KBC8"/>
    </source>
</evidence>
<evidence type="ECO:0000269" key="3">
    <source>
    </source>
</evidence>
<evidence type="ECO:0000303" key="4">
    <source>
    </source>
</evidence>
<evidence type="ECO:0000305" key="5"/>
<evidence type="ECO:0000312" key="6">
    <source>
        <dbReference type="EMBL" id="AAL21797.1"/>
    </source>
</evidence>
<evidence type="ECO:0007744" key="7">
    <source>
        <dbReference type="PDB" id="3DQQ"/>
    </source>
</evidence>
<evidence type="ECO:0007829" key="8">
    <source>
        <dbReference type="PDB" id="3DQQ"/>
    </source>
</evidence>
<comment type="function">
    <text evidence="1">Catalyzes the ATP-dependent phosphorylation of 3-oxo-tetronate to 3-oxo-tetronate 4-phosphate.</text>
</comment>
<comment type="catalytic activity">
    <reaction evidence="1">
        <text>3-dehydro-L-erythronate + ATP = 3-dehydro-4-O-phospho-L-erythronate + ADP + H(+)</text>
        <dbReference type="Rhea" id="RHEA:52552"/>
        <dbReference type="ChEBI" id="CHEBI:15378"/>
        <dbReference type="ChEBI" id="CHEBI:30616"/>
        <dbReference type="ChEBI" id="CHEBI:136592"/>
        <dbReference type="ChEBI" id="CHEBI:136670"/>
        <dbReference type="ChEBI" id="CHEBI:456216"/>
        <dbReference type="EC" id="2.7.1.217"/>
    </reaction>
</comment>
<comment type="catalytic activity">
    <reaction evidence="1">
        <text>3-dehydro-D-erythronate + ATP = 3-dehydro-4-O-phospho-D-erythronate + ADP + H(+)</text>
        <dbReference type="Rhea" id="RHEA:52556"/>
        <dbReference type="ChEBI" id="CHEBI:15378"/>
        <dbReference type="ChEBI" id="CHEBI:30616"/>
        <dbReference type="ChEBI" id="CHEBI:57958"/>
        <dbReference type="ChEBI" id="CHEBI:136593"/>
        <dbReference type="ChEBI" id="CHEBI:456216"/>
        <dbReference type="EC" id="2.7.1.217"/>
    </reaction>
</comment>
<comment type="disruption phenotype">
    <text evidence="3">Deletion mutant is unable to use L-threonate or D-erythronate as a carbon source.</text>
</comment>
<comment type="similarity">
    <text evidence="5">Belongs to the four-carbon acid sugar kinase family.</text>
</comment>
<dbReference type="EC" id="2.7.1.217" evidence="1"/>
<dbReference type="EMBL" id="AE006468">
    <property type="protein sequence ID" value="AAL21797.1"/>
    <property type="molecule type" value="Genomic_DNA"/>
</dbReference>
<dbReference type="RefSeq" id="NP_461838.1">
    <property type="nucleotide sequence ID" value="NC_003197.2"/>
</dbReference>
<dbReference type="RefSeq" id="WP_000912488.1">
    <property type="nucleotide sequence ID" value="NC_003197.2"/>
</dbReference>
<dbReference type="PDB" id="3DQQ">
    <property type="method" value="X-ray"/>
    <property type="resolution" value="2.70 A"/>
    <property type="chains" value="A/B=1-420"/>
</dbReference>
<dbReference type="PDBsum" id="3DQQ"/>
<dbReference type="SMR" id="Q8ZMG5"/>
<dbReference type="STRING" id="99287.STM2917"/>
<dbReference type="PaxDb" id="99287-STM2917"/>
<dbReference type="GeneID" id="1254440"/>
<dbReference type="KEGG" id="stm:STM2917"/>
<dbReference type="PATRIC" id="fig|99287.12.peg.3071"/>
<dbReference type="HOGENOM" id="CLU_029424_1_0_6"/>
<dbReference type="PhylomeDB" id="Q8ZMG5"/>
<dbReference type="BioCyc" id="SENT99287:STM2917-MONOMER"/>
<dbReference type="BRENDA" id="2.7.1.217">
    <property type="organism ID" value="5542"/>
</dbReference>
<dbReference type="EvolutionaryTrace" id="Q8ZMG5"/>
<dbReference type="Proteomes" id="UP000001014">
    <property type="component" value="Chromosome"/>
</dbReference>
<dbReference type="GO" id="GO:0005524">
    <property type="term" value="F:ATP binding"/>
    <property type="evidence" value="ECO:0007669"/>
    <property type="project" value="UniProtKB-KW"/>
</dbReference>
<dbReference type="GO" id="GO:0016301">
    <property type="term" value="F:kinase activity"/>
    <property type="evidence" value="ECO:0007669"/>
    <property type="project" value="UniProtKB-KW"/>
</dbReference>
<dbReference type="Gene3D" id="3.40.980.20">
    <property type="entry name" value="Four-carbon acid sugar kinase, nucleotide binding domain"/>
    <property type="match status" value="1"/>
</dbReference>
<dbReference type="Gene3D" id="3.40.50.10840">
    <property type="entry name" value="Putative sugar-binding, N-terminal domain"/>
    <property type="match status" value="1"/>
</dbReference>
<dbReference type="InterPro" id="IPR010737">
    <property type="entry name" value="4-carb_acid_sugar_kinase_N"/>
</dbReference>
<dbReference type="InterPro" id="IPR037051">
    <property type="entry name" value="4-carb_acid_sugar_kinase_N_sf"/>
</dbReference>
<dbReference type="InterPro" id="IPR031475">
    <property type="entry name" value="NBD_C"/>
</dbReference>
<dbReference type="InterPro" id="IPR042213">
    <property type="entry name" value="NBD_C_sf"/>
</dbReference>
<dbReference type="InterPro" id="IPR050007">
    <property type="entry name" value="OtnK"/>
</dbReference>
<dbReference type="NCBIfam" id="NF043035">
    <property type="entry name" value="OxoTetrKin"/>
    <property type="match status" value="1"/>
</dbReference>
<dbReference type="Pfam" id="PF17042">
    <property type="entry name" value="NBD_C"/>
    <property type="match status" value="1"/>
</dbReference>
<dbReference type="Pfam" id="PF07005">
    <property type="entry name" value="SBD_N"/>
    <property type="match status" value="1"/>
</dbReference>
<dbReference type="SUPFAM" id="SSF142764">
    <property type="entry name" value="YgbK-like"/>
    <property type="match status" value="1"/>
</dbReference>
<sequence length="420" mass="44791">MLKIGVIADDFTGATDIASFLVENGMPTVQINDVPTGTQPEGCDAVVISLKTRSCPAQEAIKQSLAALVWLKKQGCQQVYFKYCSTFDSTAEGNIGPVTDALMVALDTSFTVISPALPVNGRTVYQGYLFVMNHLLAESGMRHHPINPMTDSYLPRLMEAQAQGRCGVIPAQTLDEGVAATRAALSRLQQEGYRYAVLDALNERHLEIQGEVLRDAPLVTGGSGLAMGLARQWAKHGVSQARSAGYPLSGRAVVLSGSCSQMTNQQVAFYRQHAPTRDVDVARCLSSETREAYAEALAQWVLSQDSELAPMISATASTQALAAIQQQYGATEASHAVEALFSLLAARLAEGGITRFIVAGGETSGVVTQSLGITGFHIGPCISPGVPWVNALHAPVSLALKSGNFGDESFFIRAQREFQV</sequence>
<name>OTNK_SALTY</name>
<accession>Q8ZMG5</accession>